<proteinExistence type="inferred from homology"/>
<dbReference type="EC" id="1.1.99.2"/>
<dbReference type="EMBL" id="DS469714">
    <property type="protein sequence ID" value="EDO34943.1"/>
    <property type="molecule type" value="Genomic_DNA"/>
</dbReference>
<dbReference type="RefSeq" id="XP_001627043.1">
    <property type="nucleotide sequence ID" value="XM_001626993.1"/>
</dbReference>
<dbReference type="SMR" id="A7SMW7"/>
<dbReference type="STRING" id="45351.A7SMW7"/>
<dbReference type="EnsemblMetazoa" id="EDO34943">
    <property type="protein sequence ID" value="EDO34943"/>
    <property type="gene ID" value="NEMVEDRAFT_v1g172254"/>
</dbReference>
<dbReference type="KEGG" id="nve:5506318"/>
<dbReference type="eggNOG" id="KOG2665">
    <property type="taxonomic scope" value="Eukaryota"/>
</dbReference>
<dbReference type="HOGENOM" id="CLU_024775_0_0_1"/>
<dbReference type="InParanoid" id="A7SMW7"/>
<dbReference type="OMA" id="GVHFTRM"/>
<dbReference type="OrthoDB" id="498204at2759"/>
<dbReference type="PhylomeDB" id="A7SMW7"/>
<dbReference type="Proteomes" id="UP000001593">
    <property type="component" value="Unassembled WGS sequence"/>
</dbReference>
<dbReference type="GO" id="GO:0005739">
    <property type="term" value="C:mitochondrion"/>
    <property type="evidence" value="ECO:0007669"/>
    <property type="project" value="UniProtKB-SubCell"/>
</dbReference>
<dbReference type="GO" id="GO:0047545">
    <property type="term" value="F:2-hydroxyglutarate dehydrogenase activity"/>
    <property type="evidence" value="ECO:0000318"/>
    <property type="project" value="GO_Central"/>
</dbReference>
<dbReference type="Gene3D" id="3.30.9.10">
    <property type="entry name" value="D-Amino Acid Oxidase, subunit A, domain 2"/>
    <property type="match status" value="1"/>
</dbReference>
<dbReference type="Gene3D" id="3.50.50.60">
    <property type="entry name" value="FAD/NAD(P)-binding domain"/>
    <property type="match status" value="1"/>
</dbReference>
<dbReference type="InterPro" id="IPR006076">
    <property type="entry name" value="FAD-dep_OxRdtase"/>
</dbReference>
<dbReference type="InterPro" id="IPR036188">
    <property type="entry name" value="FAD/NAD-bd_sf"/>
</dbReference>
<dbReference type="NCBIfam" id="NF008726">
    <property type="entry name" value="PRK11728.1"/>
    <property type="match status" value="1"/>
</dbReference>
<dbReference type="PANTHER" id="PTHR43104">
    <property type="entry name" value="L-2-HYDROXYGLUTARATE DEHYDROGENASE, MITOCHONDRIAL"/>
    <property type="match status" value="1"/>
</dbReference>
<dbReference type="PANTHER" id="PTHR43104:SF2">
    <property type="entry name" value="L-2-HYDROXYGLUTARATE DEHYDROGENASE, MITOCHONDRIAL"/>
    <property type="match status" value="1"/>
</dbReference>
<dbReference type="Pfam" id="PF01266">
    <property type="entry name" value="DAO"/>
    <property type="match status" value="1"/>
</dbReference>
<dbReference type="SUPFAM" id="SSF51905">
    <property type="entry name" value="FAD/NAD(P)-binding domain"/>
    <property type="match status" value="1"/>
</dbReference>
<reference key="1">
    <citation type="journal article" date="2007" name="Science">
        <title>Sea anemone genome reveals ancestral eumetazoan gene repertoire and genomic organization.</title>
        <authorList>
            <person name="Putnam N.H."/>
            <person name="Srivastava M."/>
            <person name="Hellsten U."/>
            <person name="Dirks B."/>
            <person name="Chapman J."/>
            <person name="Salamov A."/>
            <person name="Terry A."/>
            <person name="Shapiro H."/>
            <person name="Lindquist E."/>
            <person name="Kapitonov V.V."/>
            <person name="Jurka J."/>
            <person name="Genikhovich G."/>
            <person name="Grigoriev I.V."/>
            <person name="Lucas S.M."/>
            <person name="Steele R.E."/>
            <person name="Finnerty J.R."/>
            <person name="Technau U."/>
            <person name="Martindale M.Q."/>
            <person name="Rokhsar D.S."/>
        </authorList>
    </citation>
    <scope>NUCLEOTIDE SEQUENCE [LARGE SCALE GENOMIC DNA]</scope>
    <source>
        <strain>CH2 X CH6</strain>
    </source>
</reference>
<evidence type="ECO:0000250" key="1"/>
<evidence type="ECO:0000255" key="2"/>
<evidence type="ECO:0000305" key="3"/>
<accession>A7SMW7</accession>
<sequence>MLKTSFLLSKRNAVSLSRVLATGISGRNVRHLTLQPSEHYDVAIVGGGIVGLATARELILRHPKLTFCVLEKEKELSMHQSGHNSGVIHCGIYYTPGSLKAKLCVQGLDLTYQYCDEHNIPYKKCGKLIVAVEDKEIPLLNNLYERGKKNGVKDLTMVDKRGIKEIEPHCEGMFAIVSPNTGIVDWAQVALAYGDDFRKGGGDIFTGYEVTDFKCASESGKSQEKEAGLTHPVTVFSNNKQTIKCRYVITCGGLYSDRLAEKSGCNREPRIVPFRGDYLVLKPEKCHLVKGNIYPVPDPNFPFLGVHFTPRMDGSVWLGPNAVLAFAREGYNLLDINLRDLADALAFRGLRQLMFKYFSFGVGEYYRGLNHAAQVKQLQKYIPSVTADDVVSGPSGVRAQALDRDGNLVDDFVFDGGVGEIGSRVLHVRNAPSPAATSSLAIARMVADKAAERFTL</sequence>
<organism>
    <name type="scientific">Nematostella vectensis</name>
    <name type="common">Starlet sea anemone</name>
    <dbReference type="NCBI Taxonomy" id="45351"/>
    <lineage>
        <taxon>Eukaryota</taxon>
        <taxon>Metazoa</taxon>
        <taxon>Cnidaria</taxon>
        <taxon>Anthozoa</taxon>
        <taxon>Hexacorallia</taxon>
        <taxon>Actiniaria</taxon>
        <taxon>Edwardsiidae</taxon>
        <taxon>Nematostella</taxon>
    </lineage>
</organism>
<feature type="transit peptide" description="Mitochondrion" evidence="2">
    <location>
        <begin position="1"/>
        <end position="20"/>
    </location>
</feature>
<feature type="chain" id="PRO_0000331209" description="L-2-hydroxyglutarate dehydrogenase, mitochondrial">
    <location>
        <begin position="21"/>
        <end position="456"/>
    </location>
</feature>
<comment type="catalytic activity">
    <reaction>
        <text>(S)-2-hydroxyglutarate + A = 2-oxoglutarate + AH2</text>
        <dbReference type="Rhea" id="RHEA:21252"/>
        <dbReference type="ChEBI" id="CHEBI:13193"/>
        <dbReference type="ChEBI" id="CHEBI:16782"/>
        <dbReference type="ChEBI" id="CHEBI:16810"/>
        <dbReference type="ChEBI" id="CHEBI:17499"/>
        <dbReference type="EC" id="1.1.99.2"/>
    </reaction>
</comment>
<comment type="cofactor">
    <cofactor evidence="1">
        <name>FAD</name>
        <dbReference type="ChEBI" id="CHEBI:57692"/>
    </cofactor>
</comment>
<comment type="subcellular location">
    <subcellularLocation>
        <location evidence="1">Mitochondrion</location>
    </subcellularLocation>
</comment>
<comment type="similarity">
    <text evidence="3">Belongs to the L2HGDH family.</text>
</comment>
<keyword id="KW-0274">FAD</keyword>
<keyword id="KW-0285">Flavoprotein</keyword>
<keyword id="KW-0496">Mitochondrion</keyword>
<keyword id="KW-0560">Oxidoreductase</keyword>
<keyword id="KW-1185">Reference proteome</keyword>
<keyword id="KW-0809">Transit peptide</keyword>
<protein>
    <recommendedName>
        <fullName>L-2-hydroxyglutarate dehydrogenase, mitochondrial</fullName>
        <ecNumber>1.1.99.2</ecNumber>
    </recommendedName>
</protein>
<gene>
    <name type="ORF">v1g172254</name>
</gene>
<name>L2HDH_NEMVE</name>